<feature type="chain" id="PRO_0000172575" description="Phosphatidylglycerol--prolipoprotein diacylglyceryl transferase">
    <location>
        <begin position="1"/>
        <end position="271"/>
    </location>
</feature>
<feature type="transmembrane region" description="Helical" evidence="1">
    <location>
        <begin position="25"/>
        <end position="45"/>
    </location>
</feature>
<feature type="transmembrane region" description="Helical" evidence="1">
    <location>
        <begin position="60"/>
        <end position="80"/>
    </location>
</feature>
<feature type="transmembrane region" description="Helical" evidence="1">
    <location>
        <begin position="103"/>
        <end position="123"/>
    </location>
</feature>
<feature type="transmembrane region" description="Helical" evidence="1">
    <location>
        <begin position="134"/>
        <end position="154"/>
    </location>
</feature>
<feature type="transmembrane region" description="Helical" evidence="1">
    <location>
        <begin position="181"/>
        <end position="201"/>
    </location>
</feature>
<feature type="transmembrane region" description="Helical" evidence="1">
    <location>
        <begin position="209"/>
        <end position="229"/>
    </location>
</feature>
<feature type="transmembrane region" description="Helical" evidence="1">
    <location>
        <begin position="235"/>
        <end position="255"/>
    </location>
</feature>
<feature type="binding site" evidence="1">
    <location>
        <position position="152"/>
    </location>
    <ligand>
        <name>a 1,2-diacyl-sn-glycero-3-phospho-(1'-sn-glycerol)</name>
        <dbReference type="ChEBI" id="CHEBI:64716"/>
    </ligand>
</feature>
<evidence type="ECO:0000255" key="1">
    <source>
        <dbReference type="HAMAP-Rule" id="MF_01147"/>
    </source>
</evidence>
<organism>
    <name type="scientific">Campylobacter jejuni subsp. jejuni serotype O:2 (strain ATCC 700819 / NCTC 11168)</name>
    <dbReference type="NCBI Taxonomy" id="192222"/>
    <lineage>
        <taxon>Bacteria</taxon>
        <taxon>Pseudomonadati</taxon>
        <taxon>Campylobacterota</taxon>
        <taxon>Epsilonproteobacteria</taxon>
        <taxon>Campylobacterales</taxon>
        <taxon>Campylobacteraceae</taxon>
        <taxon>Campylobacter</taxon>
    </lineage>
</organism>
<dbReference type="EC" id="2.5.1.145" evidence="1"/>
<dbReference type="EMBL" id="AL111168">
    <property type="protein sequence ID" value="CAL34557.1"/>
    <property type="molecule type" value="Genomic_DNA"/>
</dbReference>
<dbReference type="PIR" id="E81384">
    <property type="entry name" value="E81384"/>
</dbReference>
<dbReference type="RefSeq" id="WP_002854600.1">
    <property type="nucleotide sequence ID" value="NZ_SZUC01000004.1"/>
</dbReference>
<dbReference type="RefSeq" id="YP_002343844.1">
    <property type="nucleotide sequence ID" value="NC_002163.1"/>
</dbReference>
<dbReference type="SMR" id="Q9PI98"/>
<dbReference type="STRING" id="192222.Cj0407"/>
<dbReference type="PaxDb" id="192222-Cj0407"/>
<dbReference type="EnsemblBacteria" id="CAL34557">
    <property type="protein sequence ID" value="CAL34557"/>
    <property type="gene ID" value="Cj0407"/>
</dbReference>
<dbReference type="GeneID" id="904731"/>
<dbReference type="KEGG" id="cje:Cj0407"/>
<dbReference type="PATRIC" id="fig|192222.6.peg.398"/>
<dbReference type="eggNOG" id="COG0682">
    <property type="taxonomic scope" value="Bacteria"/>
</dbReference>
<dbReference type="HOGENOM" id="CLU_013386_1_2_7"/>
<dbReference type="OrthoDB" id="871140at2"/>
<dbReference type="UniPathway" id="UPA00664"/>
<dbReference type="Proteomes" id="UP000000799">
    <property type="component" value="Chromosome"/>
</dbReference>
<dbReference type="GO" id="GO:0005886">
    <property type="term" value="C:plasma membrane"/>
    <property type="evidence" value="ECO:0007669"/>
    <property type="project" value="UniProtKB-SubCell"/>
</dbReference>
<dbReference type="GO" id="GO:0008961">
    <property type="term" value="F:phosphatidylglycerol-prolipoprotein diacylglyceryl transferase activity"/>
    <property type="evidence" value="ECO:0007669"/>
    <property type="project" value="UniProtKB-UniRule"/>
</dbReference>
<dbReference type="GO" id="GO:0042158">
    <property type="term" value="P:lipoprotein biosynthetic process"/>
    <property type="evidence" value="ECO:0007669"/>
    <property type="project" value="UniProtKB-UniRule"/>
</dbReference>
<dbReference type="HAMAP" id="MF_01147">
    <property type="entry name" value="Lgt"/>
    <property type="match status" value="1"/>
</dbReference>
<dbReference type="InterPro" id="IPR001640">
    <property type="entry name" value="Lgt"/>
</dbReference>
<dbReference type="NCBIfam" id="TIGR00544">
    <property type="entry name" value="lgt"/>
    <property type="match status" value="1"/>
</dbReference>
<dbReference type="PANTHER" id="PTHR30589:SF0">
    <property type="entry name" value="PHOSPHATIDYLGLYCEROL--PROLIPOPROTEIN DIACYLGLYCERYL TRANSFERASE"/>
    <property type="match status" value="1"/>
</dbReference>
<dbReference type="PANTHER" id="PTHR30589">
    <property type="entry name" value="PROLIPOPROTEIN DIACYLGLYCERYL TRANSFERASE"/>
    <property type="match status" value="1"/>
</dbReference>
<dbReference type="Pfam" id="PF01790">
    <property type="entry name" value="LGT"/>
    <property type="match status" value="1"/>
</dbReference>
<dbReference type="PROSITE" id="PS01311">
    <property type="entry name" value="LGT"/>
    <property type="match status" value="1"/>
</dbReference>
<name>LGT_CAMJE</name>
<proteinExistence type="inferred from homology"/>
<keyword id="KW-0997">Cell inner membrane</keyword>
<keyword id="KW-1003">Cell membrane</keyword>
<keyword id="KW-0472">Membrane</keyword>
<keyword id="KW-1185">Reference proteome</keyword>
<keyword id="KW-0808">Transferase</keyword>
<keyword id="KW-0812">Transmembrane</keyword>
<keyword id="KW-1133">Transmembrane helix</keyword>
<comment type="function">
    <text evidence="1">Catalyzes the transfer of the diacylglyceryl group from phosphatidylglycerol to the sulfhydryl group of the N-terminal cysteine of a prolipoprotein, the first step in the formation of mature lipoproteins.</text>
</comment>
<comment type="catalytic activity">
    <reaction evidence="1">
        <text>L-cysteinyl-[prolipoprotein] + a 1,2-diacyl-sn-glycero-3-phospho-(1'-sn-glycerol) = an S-1,2-diacyl-sn-glyceryl-L-cysteinyl-[prolipoprotein] + sn-glycerol 1-phosphate + H(+)</text>
        <dbReference type="Rhea" id="RHEA:56712"/>
        <dbReference type="Rhea" id="RHEA-COMP:14679"/>
        <dbReference type="Rhea" id="RHEA-COMP:14680"/>
        <dbReference type="ChEBI" id="CHEBI:15378"/>
        <dbReference type="ChEBI" id="CHEBI:29950"/>
        <dbReference type="ChEBI" id="CHEBI:57685"/>
        <dbReference type="ChEBI" id="CHEBI:64716"/>
        <dbReference type="ChEBI" id="CHEBI:140658"/>
        <dbReference type="EC" id="2.5.1.145"/>
    </reaction>
</comment>
<comment type="pathway">
    <text evidence="1">Protein modification; lipoprotein biosynthesis (diacylglyceryl transfer).</text>
</comment>
<comment type="subcellular location">
    <subcellularLocation>
        <location evidence="1">Cell inner membrane</location>
        <topology evidence="1">Multi-pass membrane protein</topology>
    </subcellularLocation>
</comment>
<comment type="similarity">
    <text evidence="1">Belongs to the Lgt family.</text>
</comment>
<gene>
    <name evidence="1" type="primary">lgt</name>
    <name type="ordered locus">Cj0407</name>
</gene>
<accession>Q9PI98</accession>
<accession>Q0PBA3</accession>
<reference key="1">
    <citation type="journal article" date="2000" name="Nature">
        <title>The genome sequence of the food-borne pathogen Campylobacter jejuni reveals hypervariable sequences.</title>
        <authorList>
            <person name="Parkhill J."/>
            <person name="Wren B.W."/>
            <person name="Mungall K.L."/>
            <person name="Ketley J.M."/>
            <person name="Churcher C.M."/>
            <person name="Basham D."/>
            <person name="Chillingworth T."/>
            <person name="Davies R.M."/>
            <person name="Feltwell T."/>
            <person name="Holroyd S."/>
            <person name="Jagels K."/>
            <person name="Karlyshev A.V."/>
            <person name="Moule S."/>
            <person name="Pallen M.J."/>
            <person name="Penn C.W."/>
            <person name="Quail M.A."/>
            <person name="Rajandream M.A."/>
            <person name="Rutherford K.M."/>
            <person name="van Vliet A.H.M."/>
            <person name="Whitehead S."/>
            <person name="Barrell B.G."/>
        </authorList>
    </citation>
    <scope>NUCLEOTIDE SEQUENCE [LARGE SCALE GENOMIC DNA]</scope>
    <source>
        <strain>ATCC 700819 / NCTC 11168</strain>
    </source>
</reference>
<sequence>MEFWQHIYSNFNVIAFSIFGLKVHWYGIMYVIALLLALLLAKFFVRKFQLDINEKHLDSYFIWVEIGVILGARLGYILIYDANTMYYITHPWQIFNPYINGEFVGIRGMSYHGAIIGFLIATLLFCKKYKTNPWIFLDLVALSVPLAYVFGRIGNFLNQELFGRITNVPWGIYVDGVLRHPSQLYEAFLEGIVVFIIVYLARFKQSFQGELILVYAGAYSLARFICEFYREPDFGIGFVLWGMSMGQILSFIMFITALLVYICIKFKKVNI</sequence>
<protein>
    <recommendedName>
        <fullName evidence="1">Phosphatidylglycerol--prolipoprotein diacylglyceryl transferase</fullName>
        <ecNumber evidence="1">2.5.1.145</ecNumber>
    </recommendedName>
</protein>